<gene>
    <name type="primary">HCN1</name>
</gene>
<sequence>MEGGGKPNSSSNSRDDGNSVFPAKAPATGAGPAAAEKRLGTPPGGGGAGAKEHGNSVCFKVDGGGGGGEESAGGLEDAEGPRRQYGFMQRQFTSMLQPGVNKFSLRMFGSQKAVEKEQERVKTAGFWIIHSYSDFRFYWDLIMLIMMVGNLVIIPVGITFFTEQTTTPWIIFNVASDTVFLLDLIMNFRTGTVNEDSSEIILDPKVIKMNYLKSWFVVDFISSIPVDYIFLIVEKGMDSEVYKTARALRIVRFTKILSLLRLLRLSRLIRYIHQWEEIFHMTYDLASAVVRIFNLIGMMLLLCHWDGCLQFLVPLLQDFPPDCWVSLNEMVNDSWGKQYSYALFKAMSHMLCIGYGAQAPVSMSDLWITMLSMIVGATCYAMFVGHATALIQSLDSSRRQYQEKYKQVEQYMSFHKLPADMRQKIHDYYEHRYQGKIFDEENILNELNDPLREEIVNFNCRKLVATMPLFANADPNFVTAMLSKLRFEVFQPGDYIIREGAVGKKMYFIQHGVAGVITKSSKEMKLTDGSYFGEICLLTKGRRTASVRADTYCRLYSLSVDNFNEVLEEYPMMRRAFETVAIDRLDRIGKKNSILLQKFQKDLNTGVFNNQENEILKQIVKHDREMVQAIAPISYPQMTALNSTSSTATPTSRMRTQSPPVYTATSLSHSNLHSPSPSTQTPQPSAILSPCSYTTAVCSPPVQSPLATRTFHYASPTASQLSLMPQQQQQPQAPQTQPQQPPQQPQTPGSATPKNEVHRSTQALPNTSLTREVRPLSASQPSLPHEVSTLISRPHPTVGESLASIPQPVAAVHSAGLQAAGRSTVPQRVTLFRQMSSGAIPPNRGVPPAPPPPAAPLQREASSVLNTDPEAEKPRFASNL</sequence>
<comment type="function">
    <text evidence="1 2 6">Hyperpolarization-activated ion channel that are permeable to sodium and potassium ions. Exhibits weak selectivity for potassium over sodium ions (By similarity). Contributes to the native pacemaker currents in heart (If) and in neurons (Ih) (PubMed:11328811). Participates in cerebellar mechanisms of motor learning (By similarity). May mediate responses to sour stimuli (By similarity).</text>
</comment>
<comment type="catalytic activity">
    <reaction evidence="2">
        <text>Na(+)(in) = Na(+)(out)</text>
        <dbReference type="Rhea" id="RHEA:34963"/>
        <dbReference type="ChEBI" id="CHEBI:29101"/>
    </reaction>
</comment>
<comment type="catalytic activity">
    <reaction evidence="2">
        <text>K(+)(in) = K(+)(out)</text>
        <dbReference type="Rhea" id="RHEA:29463"/>
        <dbReference type="ChEBI" id="CHEBI:29103"/>
    </reaction>
</comment>
<comment type="activity regulation">
    <text evidence="2 6">Activated by cAMP (PubMed:11328811). cAMP binding promotes tetramerization and formation of an active channel. Compared to other family members, cAMP has less stimulatory effect on HCN1 because part of the molecules already contain bound cAMP and form homotetramers when cAMP levels are low, this inherent tetramerization in HCN1 results in a weaker response to increased cAMP (By similarity).</text>
</comment>
<comment type="subunit">
    <text evidence="1 2">Homotetramer. Heterotetramer with HCN2. The potassium channel is composed of a homo- or heterotetrameric complex of pore-forming subunits. Interacts with KCNE2 (By similarity). Interacts with the SH3 domain of CSK (By similarity).</text>
</comment>
<comment type="subcellular location">
    <subcellularLocation>
        <location evidence="1">Cell membrane</location>
        <topology evidence="1">Multi-pass membrane protein</topology>
    </subcellularLocation>
</comment>
<comment type="alternative products">
    <event type="alternative splicing"/>
    <isoform>
        <id>Q9MZS1-1</id>
        <name>1</name>
        <sequence type="displayed"/>
    </isoform>
    <isoform>
        <id>Q9MZS1-2</id>
        <name>2</name>
        <sequence type="described" ref="VSP_062341"/>
    </isoform>
</comment>
<comment type="tissue specificity">
    <text evidence="5 6">Detected in myocytes in heart sinoatrial node (SAN) and in brain, in particular in the granule cell layer and in Purkinje neuron bodies in the cerebellum.</text>
</comment>
<comment type="domain">
    <text evidence="1">The segment S4 is probably the voltage-sensor and is characterized by a series of positively charged amino acids at every third position.</text>
</comment>
<comment type="similarity">
    <text evidence="7">Belongs to the potassium channel HCN family.</text>
</comment>
<organism>
    <name type="scientific">Oryctolagus cuniculus</name>
    <name type="common">Rabbit</name>
    <dbReference type="NCBI Taxonomy" id="9986"/>
    <lineage>
        <taxon>Eukaryota</taxon>
        <taxon>Metazoa</taxon>
        <taxon>Chordata</taxon>
        <taxon>Craniata</taxon>
        <taxon>Vertebrata</taxon>
        <taxon>Euteleostomi</taxon>
        <taxon>Mammalia</taxon>
        <taxon>Eutheria</taxon>
        <taxon>Euarchontoglires</taxon>
        <taxon>Glires</taxon>
        <taxon>Lagomorpha</taxon>
        <taxon>Leporidae</taxon>
        <taxon>Oryctolagus</taxon>
    </lineage>
</organism>
<name>HCN1_RABIT</name>
<dbReference type="EMBL" id="AF168122">
    <property type="protein sequence ID" value="AAF89636.2"/>
    <property type="molecule type" value="mRNA"/>
</dbReference>
<dbReference type="EMBL" id="AF155167">
    <property type="protein sequence ID" value="AAF01494.1"/>
    <property type="molecule type" value="mRNA"/>
</dbReference>
<dbReference type="EMBL" id="AAGW02030646">
    <property type="status" value="NOT_ANNOTATED_CDS"/>
    <property type="molecule type" value="Genomic_DNA"/>
</dbReference>
<dbReference type="EMBL" id="AAGW02030655">
    <property type="status" value="NOT_ANNOTATED_CDS"/>
    <property type="molecule type" value="Genomic_DNA"/>
</dbReference>
<dbReference type="EMBL" id="AAGW02030654">
    <property type="status" value="NOT_ANNOTATED_CDS"/>
    <property type="molecule type" value="Genomic_DNA"/>
</dbReference>
<dbReference type="EMBL" id="AAGW02030653">
    <property type="status" value="NOT_ANNOTATED_CDS"/>
    <property type="molecule type" value="Genomic_DNA"/>
</dbReference>
<dbReference type="EMBL" id="AAGW02030652">
    <property type="status" value="NOT_ANNOTATED_CDS"/>
    <property type="molecule type" value="Genomic_DNA"/>
</dbReference>
<dbReference type="EMBL" id="AAGW02030651">
    <property type="status" value="NOT_ANNOTATED_CDS"/>
    <property type="molecule type" value="Genomic_DNA"/>
</dbReference>
<dbReference type="EMBL" id="AAGW02030650">
    <property type="status" value="NOT_ANNOTATED_CDS"/>
    <property type="molecule type" value="Genomic_DNA"/>
</dbReference>
<dbReference type="EMBL" id="AAGW02030649">
    <property type="status" value="NOT_ANNOTATED_CDS"/>
    <property type="molecule type" value="Genomic_DNA"/>
</dbReference>
<dbReference type="EMBL" id="AAGW02030648">
    <property type="status" value="NOT_ANNOTATED_CDS"/>
    <property type="molecule type" value="Genomic_DNA"/>
</dbReference>
<dbReference type="EMBL" id="AAGW02030647">
    <property type="status" value="NOT_ANNOTATED_CDS"/>
    <property type="molecule type" value="Genomic_DNA"/>
</dbReference>
<dbReference type="RefSeq" id="NP_001075532.1">
    <property type="nucleotide sequence ID" value="NM_001082063.1"/>
</dbReference>
<dbReference type="RefSeq" id="XP_008260260.1">
    <property type="nucleotide sequence ID" value="XM_008262038.2"/>
</dbReference>
<dbReference type="SMR" id="Q9MZS1"/>
<dbReference type="STRING" id="9986.ENSOCUP00000014684"/>
<dbReference type="GlyCosmos" id="Q9MZS1">
    <property type="glycosylation" value="1 site, No reported glycans"/>
</dbReference>
<dbReference type="PaxDb" id="9986-ENSOCUP00000014684"/>
<dbReference type="Ensembl" id="ENSOCUT00000017086.4">
    <molecule id="Q9MZS1-1"/>
    <property type="protein sequence ID" value="ENSOCUP00000014684.2"/>
    <property type="gene ID" value="ENSOCUG00000017084.4"/>
</dbReference>
<dbReference type="GeneID" id="100008732"/>
<dbReference type="KEGG" id="ocu:100008732"/>
<dbReference type="CTD" id="348980"/>
<dbReference type="eggNOG" id="KOG0498">
    <property type="taxonomic scope" value="Eukaryota"/>
</dbReference>
<dbReference type="GeneTree" id="ENSGT00940000158207"/>
<dbReference type="HOGENOM" id="CLU_005746_15_0_1"/>
<dbReference type="InParanoid" id="Q9MZS1"/>
<dbReference type="OMA" id="TIITRPH"/>
<dbReference type="OrthoDB" id="421226at2759"/>
<dbReference type="TreeFam" id="TF318250"/>
<dbReference type="Proteomes" id="UP000001811">
    <property type="component" value="Chromosome 11"/>
</dbReference>
<dbReference type="Bgee" id="ENSOCUG00000017084">
    <property type="expression patterns" value="Expressed in frontal cortex and 13 other cell types or tissues"/>
</dbReference>
<dbReference type="GO" id="GO:0030424">
    <property type="term" value="C:axon"/>
    <property type="evidence" value="ECO:0007669"/>
    <property type="project" value="Ensembl"/>
</dbReference>
<dbReference type="GO" id="GO:0030425">
    <property type="term" value="C:dendrite"/>
    <property type="evidence" value="ECO:0007669"/>
    <property type="project" value="Ensembl"/>
</dbReference>
<dbReference type="GO" id="GO:0098978">
    <property type="term" value="C:glutamatergic synapse"/>
    <property type="evidence" value="ECO:0007669"/>
    <property type="project" value="Ensembl"/>
</dbReference>
<dbReference type="GO" id="GO:0098855">
    <property type="term" value="C:HCN channel complex"/>
    <property type="evidence" value="ECO:0000250"/>
    <property type="project" value="UniProtKB"/>
</dbReference>
<dbReference type="GO" id="GO:0005886">
    <property type="term" value="C:plasma membrane"/>
    <property type="evidence" value="ECO:0000250"/>
    <property type="project" value="UniProtKB"/>
</dbReference>
<dbReference type="GO" id="GO:0045211">
    <property type="term" value="C:postsynaptic membrane"/>
    <property type="evidence" value="ECO:0007669"/>
    <property type="project" value="Ensembl"/>
</dbReference>
<dbReference type="GO" id="GO:0048787">
    <property type="term" value="C:presynaptic active zone membrane"/>
    <property type="evidence" value="ECO:0007669"/>
    <property type="project" value="Ensembl"/>
</dbReference>
<dbReference type="GO" id="GO:0030552">
    <property type="term" value="F:cAMP binding"/>
    <property type="evidence" value="ECO:0000250"/>
    <property type="project" value="UniProtKB"/>
</dbReference>
<dbReference type="GO" id="GO:0042802">
    <property type="term" value="F:identical protein binding"/>
    <property type="evidence" value="ECO:0007669"/>
    <property type="project" value="Ensembl"/>
</dbReference>
<dbReference type="GO" id="GO:0140232">
    <property type="term" value="F:intracellular cAMP-activated cation channel activity involved in regulation of presynaptic membrane potential"/>
    <property type="evidence" value="ECO:0007669"/>
    <property type="project" value="Ensembl"/>
</dbReference>
<dbReference type="GO" id="GO:0005222">
    <property type="term" value="F:intracellularly cAMP-activated cation channel activity"/>
    <property type="evidence" value="ECO:0000250"/>
    <property type="project" value="UniProtKB"/>
</dbReference>
<dbReference type="GO" id="GO:0022843">
    <property type="term" value="F:voltage-gated monoatomic cation channel activity"/>
    <property type="evidence" value="ECO:0000250"/>
    <property type="project" value="UniProtKB"/>
</dbReference>
<dbReference type="GO" id="GO:0005249">
    <property type="term" value="F:voltage-gated potassium channel activity"/>
    <property type="evidence" value="ECO:0000250"/>
    <property type="project" value="UniProtKB"/>
</dbReference>
<dbReference type="GO" id="GO:0005248">
    <property type="term" value="F:voltage-gated sodium channel activity"/>
    <property type="evidence" value="ECO:0007669"/>
    <property type="project" value="Ensembl"/>
</dbReference>
<dbReference type="GO" id="GO:0045176">
    <property type="term" value="P:apical protein localization"/>
    <property type="evidence" value="ECO:0007669"/>
    <property type="project" value="Ensembl"/>
</dbReference>
<dbReference type="GO" id="GO:0071320">
    <property type="term" value="P:cellular response to cAMP"/>
    <property type="evidence" value="ECO:0000250"/>
    <property type="project" value="UniProtKB"/>
</dbReference>
<dbReference type="GO" id="GO:0051867">
    <property type="term" value="P:general adaptation syndrome, behavioral process"/>
    <property type="evidence" value="ECO:0007669"/>
    <property type="project" value="Ensembl"/>
</dbReference>
<dbReference type="GO" id="GO:0019228">
    <property type="term" value="P:neuronal action potential"/>
    <property type="evidence" value="ECO:0007669"/>
    <property type="project" value="Ensembl"/>
</dbReference>
<dbReference type="GO" id="GO:0071805">
    <property type="term" value="P:potassium ion transmembrane transport"/>
    <property type="evidence" value="ECO:0000250"/>
    <property type="project" value="UniProtKB"/>
</dbReference>
<dbReference type="GO" id="GO:0051289">
    <property type="term" value="P:protein homotetramerization"/>
    <property type="evidence" value="ECO:0000250"/>
    <property type="project" value="UniProtKB"/>
</dbReference>
<dbReference type="GO" id="GO:0003254">
    <property type="term" value="P:regulation of membrane depolarization"/>
    <property type="evidence" value="ECO:0007669"/>
    <property type="project" value="Ensembl"/>
</dbReference>
<dbReference type="GO" id="GO:0046549">
    <property type="term" value="P:retinal cone cell development"/>
    <property type="evidence" value="ECO:0007669"/>
    <property type="project" value="Ensembl"/>
</dbReference>
<dbReference type="CDD" id="cd00038">
    <property type="entry name" value="CAP_ED"/>
    <property type="match status" value="1"/>
</dbReference>
<dbReference type="FunFam" id="1.10.287.70:FF:000031">
    <property type="entry name" value="Potassium/sodium hyperpolarization-activated cyclic nucleotide-gated channel 1, putative"/>
    <property type="match status" value="1"/>
</dbReference>
<dbReference type="FunFam" id="1.10.287.630:FF:000002">
    <property type="entry name" value="Potassium/sodium hyperpolarization-activated cyclic nucleotide-gated channel 4"/>
    <property type="match status" value="1"/>
</dbReference>
<dbReference type="FunFam" id="2.60.120.10:FF:000007">
    <property type="entry name" value="Putative potassium/sodium hyperpolarization-activated cyclic nucleotide-gated channel 2"/>
    <property type="match status" value="1"/>
</dbReference>
<dbReference type="Gene3D" id="1.10.287.70">
    <property type="match status" value="1"/>
</dbReference>
<dbReference type="Gene3D" id="1.10.287.630">
    <property type="entry name" value="Helix hairpin bin"/>
    <property type="match status" value="1"/>
</dbReference>
<dbReference type="Gene3D" id="2.60.120.10">
    <property type="entry name" value="Jelly Rolls"/>
    <property type="match status" value="1"/>
</dbReference>
<dbReference type="InterPro" id="IPR018488">
    <property type="entry name" value="cNMP-bd_CS"/>
</dbReference>
<dbReference type="InterPro" id="IPR000595">
    <property type="entry name" value="cNMP-bd_dom"/>
</dbReference>
<dbReference type="InterPro" id="IPR018490">
    <property type="entry name" value="cNMP-bd_dom_sf"/>
</dbReference>
<dbReference type="InterPro" id="IPR005821">
    <property type="entry name" value="Ion_trans_dom"/>
</dbReference>
<dbReference type="InterPro" id="IPR013621">
    <property type="entry name" value="Ion_trans_N"/>
</dbReference>
<dbReference type="InterPro" id="IPR051413">
    <property type="entry name" value="K/Na_HCN_channel"/>
</dbReference>
<dbReference type="InterPro" id="IPR003938">
    <property type="entry name" value="K_chnl_volt-dep_EAG/ELK/ERG"/>
</dbReference>
<dbReference type="InterPro" id="IPR014710">
    <property type="entry name" value="RmlC-like_jellyroll"/>
</dbReference>
<dbReference type="PANTHER" id="PTHR45689">
    <property type="entry name" value="I[[H]] CHANNEL, ISOFORM E"/>
    <property type="match status" value="1"/>
</dbReference>
<dbReference type="PANTHER" id="PTHR45689:SF3">
    <property type="entry name" value="POTASSIUM_SODIUM HYPERPOLARIZATION-ACTIVATED CYCLIC NUCLEOTIDE-GATED CHANNEL 1"/>
    <property type="match status" value="1"/>
</dbReference>
<dbReference type="Pfam" id="PF00027">
    <property type="entry name" value="cNMP_binding"/>
    <property type="match status" value="1"/>
</dbReference>
<dbReference type="Pfam" id="PF00520">
    <property type="entry name" value="Ion_trans"/>
    <property type="match status" value="1"/>
</dbReference>
<dbReference type="Pfam" id="PF08412">
    <property type="entry name" value="Ion_trans_N"/>
    <property type="match status" value="1"/>
</dbReference>
<dbReference type="PRINTS" id="PR01463">
    <property type="entry name" value="EAGCHANLFMLY"/>
</dbReference>
<dbReference type="SMART" id="SM00100">
    <property type="entry name" value="cNMP"/>
    <property type="match status" value="1"/>
</dbReference>
<dbReference type="SUPFAM" id="SSF51206">
    <property type="entry name" value="cAMP-binding domain-like"/>
    <property type="match status" value="1"/>
</dbReference>
<dbReference type="SUPFAM" id="SSF81324">
    <property type="entry name" value="Voltage-gated potassium channels"/>
    <property type="match status" value="1"/>
</dbReference>
<dbReference type="PROSITE" id="PS00888">
    <property type="entry name" value="CNMP_BINDING_1"/>
    <property type="match status" value="1"/>
</dbReference>
<dbReference type="PROSITE" id="PS50042">
    <property type="entry name" value="CNMP_BINDING_3"/>
    <property type="match status" value="1"/>
</dbReference>
<evidence type="ECO:0000250" key="1">
    <source>
        <dbReference type="UniProtKB" id="O60741"/>
    </source>
</evidence>
<evidence type="ECO:0000250" key="2">
    <source>
        <dbReference type="UniProtKB" id="O88704"/>
    </source>
</evidence>
<evidence type="ECO:0000255" key="3"/>
<evidence type="ECO:0000256" key="4">
    <source>
        <dbReference type="SAM" id="MobiDB-lite"/>
    </source>
</evidence>
<evidence type="ECO:0000269" key="5">
    <source>
    </source>
</evidence>
<evidence type="ECO:0000269" key="6">
    <source>
    </source>
</evidence>
<evidence type="ECO:0000305" key="7"/>
<reference key="1">
    <citation type="journal article" date="2001" name="J. Biol. Chem.">
        <title>Hyperpolarization-activated cyclic nucleotide-gated channel 1 is a molecular determinant of the cardiac pacemaker current If.</title>
        <authorList>
            <person name="Moroni A."/>
            <person name="Gorza L."/>
            <person name="Beltrame M."/>
            <person name="Gravante B."/>
            <person name="Vaccari T."/>
            <person name="Bianchi M.E."/>
            <person name="Altomare C."/>
            <person name="Longhi R."/>
            <person name="Heurteaux C."/>
            <person name="Vitadello M."/>
            <person name="Malgaroli A."/>
            <person name="DiFrancesco D."/>
        </authorList>
    </citation>
    <scope>NUCLEOTIDE SEQUENCE [MRNA] (ISOFORM 2)</scope>
    <scope>FUNCTION</scope>
    <scope>ACTIVITY REGULATION</scope>
    <scope>TISSUE SPECIFICITY</scope>
    <source>
        <strain>New Zealand white</strain>
        <tissue>Heart</tissue>
    </source>
</reference>
<reference key="2">
    <citation type="journal article" date="1999" name="Circ. Res.">
        <title>Distribution and prevalence of hyperpolarization-activated cation channel (HCN) mRNA expression in cardiac tissues.</title>
        <authorList>
            <person name="Shi W."/>
            <person name="Wymore R."/>
            <person name="Yu H."/>
            <person name="Wu J."/>
            <person name="Wymore R.T."/>
            <person name="Pan Z."/>
            <person name="Robinson R.B."/>
            <person name="Dixon J.E."/>
            <person name="McKinnon D."/>
            <person name="Cohen I.S."/>
        </authorList>
    </citation>
    <scope>NUCLEOTIDE SEQUENCE [MRNA] OF 153-294</scope>
    <scope>TISSUE SPECIFICITY</scope>
    <source>
        <tissue>Heart</tissue>
    </source>
</reference>
<reference key="3">
    <citation type="journal article" date="2011" name="Nature">
        <title>A high-resolution map of human evolutionary constraint using 29 mammals.</title>
        <authorList>
            <person name="Lindblad-Toh K."/>
            <person name="Garber M."/>
            <person name="Zuk O."/>
            <person name="Lin M.F."/>
            <person name="Parker B.J."/>
            <person name="Washietl S."/>
            <person name="Kheradpour P."/>
            <person name="Ernst J."/>
            <person name="Jordan G."/>
            <person name="Mauceli E."/>
            <person name="Ward L.D."/>
            <person name="Lowe C.B."/>
            <person name="Holloway A.K."/>
            <person name="Clamp M."/>
            <person name="Gnerre S."/>
            <person name="Alfoldi J."/>
            <person name="Beal K."/>
            <person name="Chang J."/>
            <person name="Clawson H."/>
            <person name="Cuff J."/>
            <person name="Di Palma F."/>
            <person name="Fitzgerald S."/>
            <person name="Flicek P."/>
            <person name="Guttman M."/>
            <person name="Hubisz M.J."/>
            <person name="Jaffe D.B."/>
            <person name="Jungreis I."/>
            <person name="Kent W.J."/>
            <person name="Kostka D."/>
            <person name="Lara M."/>
            <person name="Martins A.L."/>
            <person name="Massingham T."/>
            <person name="Moltke I."/>
            <person name="Raney B.J."/>
            <person name="Rasmussen M.D."/>
            <person name="Robinson J."/>
            <person name="Stark A."/>
            <person name="Vilella A.J."/>
            <person name="Wen J."/>
            <person name="Xie X."/>
            <person name="Zody M.C."/>
            <person name="Baldwin J."/>
            <person name="Bloom T."/>
            <person name="Chin C.W."/>
            <person name="Heiman D."/>
            <person name="Nicol R."/>
            <person name="Nusbaum C."/>
            <person name="Young S."/>
            <person name="Wilkinson J."/>
            <person name="Worley K.C."/>
            <person name="Kovar C.L."/>
            <person name="Muzny D.M."/>
            <person name="Gibbs R.A."/>
            <person name="Cree A."/>
            <person name="Dihn H.H."/>
            <person name="Fowler G."/>
            <person name="Jhangiani S."/>
            <person name="Joshi V."/>
            <person name="Lee S."/>
            <person name="Lewis L.R."/>
            <person name="Nazareth L.V."/>
            <person name="Okwuonu G."/>
            <person name="Santibanez J."/>
            <person name="Warren W.C."/>
            <person name="Mardis E.R."/>
            <person name="Weinstock G.M."/>
            <person name="Wilson R.K."/>
            <person name="Delehaunty K."/>
            <person name="Dooling D."/>
            <person name="Fronik C."/>
            <person name="Fulton L."/>
            <person name="Fulton B."/>
            <person name="Graves T."/>
            <person name="Minx P."/>
            <person name="Sodergren E."/>
            <person name="Birney E."/>
            <person name="Margulies E.H."/>
            <person name="Herrero J."/>
            <person name="Green E.D."/>
            <person name="Haussler D."/>
            <person name="Siepel A."/>
            <person name="Goldman N."/>
            <person name="Pollard K.S."/>
            <person name="Pedersen J.S."/>
            <person name="Lander E.S."/>
            <person name="Kellis M."/>
        </authorList>
    </citation>
    <scope>NUCLEOTIDE SEQUENCE [LARGE SCALE GENOMIC DNA]</scope>
</reference>
<proteinExistence type="evidence at transcript level"/>
<keyword id="KW-0025">Alternative splicing</keyword>
<keyword id="KW-0114">cAMP</keyword>
<keyword id="KW-0116">cAMP-binding</keyword>
<keyword id="KW-1003">Cell membrane</keyword>
<keyword id="KW-0325">Glycoprotein</keyword>
<keyword id="KW-0407">Ion channel</keyword>
<keyword id="KW-0406">Ion transport</keyword>
<keyword id="KW-1071">Ligand-gated ion channel</keyword>
<keyword id="KW-0472">Membrane</keyword>
<keyword id="KW-0547">Nucleotide-binding</keyword>
<keyword id="KW-0630">Potassium</keyword>
<keyword id="KW-0631">Potassium channel</keyword>
<keyword id="KW-0633">Potassium transport</keyword>
<keyword id="KW-1185">Reference proteome</keyword>
<keyword id="KW-0915">Sodium</keyword>
<keyword id="KW-0894">Sodium channel</keyword>
<keyword id="KW-0739">Sodium transport</keyword>
<keyword id="KW-0812">Transmembrane</keyword>
<keyword id="KW-1133">Transmembrane helix</keyword>
<keyword id="KW-0813">Transport</keyword>
<keyword id="KW-0851">Voltage-gated channel</keyword>
<protein>
    <recommendedName>
        <fullName>Potassium/sodium hyperpolarization-activated cyclic nucleotide-gated channel 1</fullName>
    </recommendedName>
    <alternativeName>
        <fullName>rbHCN1</fullName>
    </alternativeName>
</protein>
<accession>Q9MZS1</accession>
<accession>G1TCZ4</accession>
<accession>Q9TU38</accession>
<accession>Q9TUE2</accession>
<accession>Q9TUE3</accession>
<feature type="chain" id="PRO_0000054109" description="Potassium/sodium hyperpolarization-activated cyclic nucleotide-gated channel 1">
    <location>
        <begin position="1"/>
        <end position="880"/>
    </location>
</feature>
<feature type="topological domain" description="Cytoplasmic" evidence="1">
    <location>
        <begin position="1"/>
        <end position="136"/>
    </location>
</feature>
<feature type="transmembrane region" description="Helical; Name=Segment S1" evidence="1">
    <location>
        <begin position="137"/>
        <end position="158"/>
    </location>
</feature>
<feature type="topological domain" description="Extracellular" evidence="1">
    <location>
        <begin position="159"/>
        <end position="167"/>
    </location>
</feature>
<feature type="transmembrane region" description="Helical; Name=Segment S2" evidence="1">
    <location>
        <begin position="168"/>
        <end position="188"/>
    </location>
</feature>
<feature type="topological domain" description="Cytoplasmic" evidence="1">
    <location>
        <begin position="189"/>
        <end position="209"/>
    </location>
</feature>
<feature type="transmembrane region" description="Helical; Name=Segment S3" evidence="1">
    <location>
        <begin position="210"/>
        <end position="230"/>
    </location>
</feature>
<feature type="topological domain" description="Extracellular" evidence="1">
    <location>
        <begin position="231"/>
        <end position="254"/>
    </location>
</feature>
<feature type="transmembrane region" description="Helical; Voltage-sensor; Name=Segment S4" evidence="1">
    <location>
        <begin position="255"/>
        <end position="275"/>
    </location>
</feature>
<feature type="topological domain" description="Cytoplasmic" evidence="1">
    <location>
        <begin position="276"/>
        <end position="289"/>
    </location>
</feature>
<feature type="transmembrane region" description="Helical; Name=Segment S5" evidence="1">
    <location>
        <begin position="290"/>
        <end position="312"/>
    </location>
</feature>
<feature type="topological domain" description="Extracellular" evidence="1">
    <location>
        <begin position="313"/>
        <end position="338"/>
    </location>
</feature>
<feature type="intramembrane region" description="Pore-forming; Name=Segment H5" evidence="1">
    <location>
        <begin position="339"/>
        <end position="360"/>
    </location>
</feature>
<feature type="topological domain" description="Extracellular" evidence="1">
    <location>
        <begin position="361"/>
        <end position="365"/>
    </location>
</feature>
<feature type="transmembrane region" description="Helical; Name=Segment S6" evidence="1">
    <location>
        <begin position="366"/>
        <end position="386"/>
    </location>
</feature>
<feature type="topological domain" description="Cytoplasmic" evidence="1">
    <location>
        <begin position="387"/>
        <end position="880"/>
    </location>
</feature>
<feature type="region of interest" description="Disordered" evidence="4">
    <location>
        <begin position="1"/>
        <end position="80"/>
    </location>
</feature>
<feature type="region of interest" description="Disordered" evidence="4">
    <location>
        <begin position="641"/>
        <end position="686"/>
    </location>
</feature>
<feature type="region of interest" description="Disordered" evidence="4">
    <location>
        <begin position="718"/>
        <end position="786"/>
    </location>
</feature>
<feature type="region of interest" description="Disordered" evidence="4">
    <location>
        <begin position="835"/>
        <end position="880"/>
    </location>
</feature>
<feature type="short sequence motif" description="Selectivity filter" evidence="1">
    <location>
        <begin position="352"/>
        <end position="356"/>
    </location>
</feature>
<feature type="compositionally biased region" description="Low complexity" evidence="4">
    <location>
        <begin position="8"/>
        <end position="34"/>
    </location>
</feature>
<feature type="compositionally biased region" description="Gly residues" evidence="4">
    <location>
        <begin position="62"/>
        <end position="71"/>
    </location>
</feature>
<feature type="compositionally biased region" description="Polar residues" evidence="4">
    <location>
        <begin position="641"/>
        <end position="664"/>
    </location>
</feature>
<feature type="compositionally biased region" description="Low complexity" evidence="4">
    <location>
        <begin position="665"/>
        <end position="685"/>
    </location>
</feature>
<feature type="compositionally biased region" description="Low complexity" evidence="4">
    <location>
        <begin position="725"/>
        <end position="738"/>
    </location>
</feature>
<feature type="compositionally biased region" description="Polar residues" evidence="4">
    <location>
        <begin position="760"/>
        <end position="770"/>
    </location>
</feature>
<feature type="compositionally biased region" description="Pro residues" evidence="4">
    <location>
        <begin position="844"/>
        <end position="855"/>
    </location>
</feature>
<feature type="compositionally biased region" description="Basic and acidic residues" evidence="4">
    <location>
        <begin position="870"/>
        <end position="880"/>
    </location>
</feature>
<feature type="binding site" evidence="1">
    <location>
        <position position="533"/>
    </location>
    <ligand>
        <name>3',5'-cyclic AMP</name>
        <dbReference type="ChEBI" id="CHEBI:58165"/>
    </ligand>
</feature>
<feature type="binding site" evidence="1">
    <location>
        <position position="534"/>
    </location>
    <ligand>
        <name>3',5'-cyclic AMP</name>
        <dbReference type="ChEBI" id="CHEBI:58165"/>
    </ligand>
</feature>
<feature type="binding site" evidence="1">
    <location>
        <position position="536"/>
    </location>
    <ligand>
        <name>3',5'-cyclic AMP</name>
        <dbReference type="ChEBI" id="CHEBI:58165"/>
    </ligand>
</feature>
<feature type="binding site" evidence="1">
    <location>
        <position position="543"/>
    </location>
    <ligand>
        <name>3',5'-cyclic AMP</name>
        <dbReference type="ChEBI" id="CHEBI:58165"/>
    </ligand>
</feature>
<feature type="binding site" evidence="1">
    <location>
        <position position="544"/>
    </location>
    <ligand>
        <name>3',5'-cyclic AMP</name>
        <dbReference type="ChEBI" id="CHEBI:58165"/>
    </ligand>
</feature>
<feature type="binding site" evidence="2">
    <location>
        <position position="584"/>
    </location>
    <ligand>
        <name>3',5'-cyclic AMP</name>
        <dbReference type="ChEBI" id="CHEBI:58165"/>
    </ligand>
</feature>
<feature type="binding site" evidence="1">
    <location>
        <position position="587"/>
    </location>
    <ligand>
        <name>3',5'-cyclic AMP</name>
        <dbReference type="ChEBI" id="CHEBI:58165"/>
    </ligand>
</feature>
<feature type="glycosylation site" description="N-linked (GlcNAc...) asparagine" evidence="3">
    <location>
        <position position="332"/>
    </location>
</feature>
<feature type="splice variant" id="VSP_062341" description="In isoform 2.">
    <original>MEGGGKPNSSSNSRDDGNSVFPAKAPATGAGPAAAEKRLGTPPGGGGAGAKEHGNSVCFKVDGGGGGGEESAG</original>
    <variation>MATASSPPRRPRRAR</variation>
    <location>
        <begin position="1"/>
        <end position="73"/>
    </location>
</feature>
<feature type="sequence conflict" description="In Ref. 1; AAF89636/AAF01494." evidence="7" ref="1">
    <original>S</original>
    <variation>P</variation>
    <location>
        <position position="131"/>
    </location>
</feature>